<name>GALT_LACPL</name>
<proteinExistence type="inferred from homology"/>
<reference key="1">
    <citation type="journal article" date="2003" name="Proc. Natl. Acad. Sci. U.S.A.">
        <title>Complete genome sequence of Lactobacillus plantarum WCFS1.</title>
        <authorList>
            <person name="Kleerebezem M."/>
            <person name="Boekhorst J."/>
            <person name="van Kranenburg R."/>
            <person name="Molenaar D."/>
            <person name="Kuipers O.P."/>
            <person name="Leer R."/>
            <person name="Tarchini R."/>
            <person name="Peters S.A."/>
            <person name="Sandbrink H.M."/>
            <person name="Fiers M.W.E.J."/>
            <person name="Stiekema W."/>
            <person name="Klein Lankhorst R.M."/>
            <person name="Bron P.A."/>
            <person name="Hoffer S.M."/>
            <person name="Nierop Groot M.N."/>
            <person name="Kerkhoven R."/>
            <person name="De Vries M."/>
            <person name="Ursing B."/>
            <person name="De Vos W.M."/>
            <person name="Siezen R.J."/>
        </authorList>
    </citation>
    <scope>NUCLEOTIDE SEQUENCE [LARGE SCALE GENOMIC DNA]</scope>
    <source>
        <strain>ATCC BAA-793 / NCIMB 8826 / WCFS1</strain>
    </source>
</reference>
<reference key="2">
    <citation type="journal article" date="2012" name="J. Bacteriol.">
        <title>Complete resequencing and reannotation of the Lactobacillus plantarum WCFS1 genome.</title>
        <authorList>
            <person name="Siezen R.J."/>
            <person name="Francke C."/>
            <person name="Renckens B."/>
            <person name="Boekhorst J."/>
            <person name="Wels M."/>
            <person name="Kleerebezem M."/>
            <person name="van Hijum S.A."/>
        </authorList>
    </citation>
    <scope>NUCLEOTIDE SEQUENCE [LARGE SCALE GENOMIC DNA]</scope>
    <scope>GENOME REANNOTATION</scope>
    <source>
        <strain>ATCC BAA-793 / NCIMB 8826 / WCFS1</strain>
    </source>
</reference>
<accession>Q88SF0</accession>
<accession>F9UUE6</accession>
<evidence type="ECO:0000255" key="1">
    <source>
        <dbReference type="HAMAP-Rule" id="MF_00571"/>
    </source>
</evidence>
<protein>
    <recommendedName>
        <fullName evidence="1">Galactose-1-phosphate uridylyltransferase</fullName>
        <shortName evidence="1">Gal-1-P uridylyltransferase</shortName>
        <ecNumber evidence="1">2.7.7.12</ecNumber>
    </recommendedName>
    <alternativeName>
        <fullName evidence="1">UDP-glucose--hexose-1-phosphate uridylyltransferase</fullName>
    </alternativeName>
</protein>
<dbReference type="EC" id="2.7.7.12" evidence="1"/>
<dbReference type="EMBL" id="AL935263">
    <property type="protein sequence ID" value="CCC80448.1"/>
    <property type="molecule type" value="Genomic_DNA"/>
</dbReference>
<dbReference type="RefSeq" id="WP_011102180.1">
    <property type="nucleotide sequence ID" value="NC_004567.2"/>
</dbReference>
<dbReference type="RefSeq" id="YP_004890962.1">
    <property type="nucleotide sequence ID" value="NC_004567.2"/>
</dbReference>
<dbReference type="STRING" id="220668.lp_3480"/>
<dbReference type="EnsemblBacteria" id="CCC80448">
    <property type="protein sequence ID" value="CCC80448"/>
    <property type="gene ID" value="lp_3480"/>
</dbReference>
<dbReference type="KEGG" id="lpl:lp_3480"/>
<dbReference type="PATRIC" id="fig|220668.9.peg.2896"/>
<dbReference type="eggNOG" id="COG4468">
    <property type="taxonomic scope" value="Bacteria"/>
</dbReference>
<dbReference type="HOGENOM" id="CLU_047799_0_0_9"/>
<dbReference type="OrthoDB" id="2293at2"/>
<dbReference type="PhylomeDB" id="Q88SF0"/>
<dbReference type="UniPathway" id="UPA00214"/>
<dbReference type="Proteomes" id="UP000000432">
    <property type="component" value="Chromosome"/>
</dbReference>
<dbReference type="GO" id="GO:0005737">
    <property type="term" value="C:cytoplasm"/>
    <property type="evidence" value="ECO:0007669"/>
    <property type="project" value="UniProtKB-SubCell"/>
</dbReference>
<dbReference type="GO" id="GO:0008108">
    <property type="term" value="F:UDP-glucose:hexose-1-phosphate uridylyltransferase activity"/>
    <property type="evidence" value="ECO:0007669"/>
    <property type="project" value="UniProtKB-UniRule"/>
</dbReference>
<dbReference type="GO" id="GO:0006012">
    <property type="term" value="P:galactose metabolic process"/>
    <property type="evidence" value="ECO:0007669"/>
    <property type="project" value="UniProtKB-UniRule"/>
</dbReference>
<dbReference type="HAMAP" id="MF_00571">
    <property type="entry name" value="GalP_UDP_trans"/>
    <property type="match status" value="1"/>
</dbReference>
<dbReference type="InterPro" id="IPR000766">
    <property type="entry name" value="GalP_uridyl_Trfase_II"/>
</dbReference>
<dbReference type="InterPro" id="IPR023425">
    <property type="entry name" value="GalP_uridyl_Trfase_II_CS"/>
</dbReference>
<dbReference type="InterPro" id="IPR005850">
    <property type="entry name" value="GalP_Utransf_C"/>
</dbReference>
<dbReference type="InterPro" id="IPR005849">
    <property type="entry name" value="GalP_Utransf_N"/>
</dbReference>
<dbReference type="NCBIfam" id="TIGR01239">
    <property type="entry name" value="galT_2"/>
    <property type="match status" value="1"/>
</dbReference>
<dbReference type="NCBIfam" id="NF003629">
    <property type="entry name" value="PRK05270.1-2"/>
    <property type="match status" value="1"/>
</dbReference>
<dbReference type="NCBIfam" id="NF003630">
    <property type="entry name" value="PRK05270.1-3"/>
    <property type="match status" value="1"/>
</dbReference>
<dbReference type="NCBIfam" id="NF003633">
    <property type="entry name" value="PRK05270.2-2"/>
    <property type="match status" value="1"/>
</dbReference>
<dbReference type="PANTHER" id="PTHR39191:SF1">
    <property type="entry name" value="DUF4922 DOMAIN-CONTAINING PROTEIN"/>
    <property type="match status" value="1"/>
</dbReference>
<dbReference type="PANTHER" id="PTHR39191">
    <property type="entry name" value="GALACTOSE-1-PHOSPHATE URIDYLYLTRANSFERASE"/>
    <property type="match status" value="1"/>
</dbReference>
<dbReference type="Pfam" id="PF02744">
    <property type="entry name" value="GalP_UDP_tr_C"/>
    <property type="match status" value="1"/>
</dbReference>
<dbReference type="Pfam" id="PF01087">
    <property type="entry name" value="GalP_UDP_transf"/>
    <property type="match status" value="1"/>
</dbReference>
<dbReference type="PIRSF" id="PIRSF006005">
    <property type="entry name" value="GalT_BS"/>
    <property type="match status" value="1"/>
</dbReference>
<dbReference type="PROSITE" id="PS01163">
    <property type="entry name" value="GAL_P_UDP_TRANSF_II"/>
    <property type="match status" value="1"/>
</dbReference>
<feature type="chain" id="PRO_0000169910" description="Galactose-1-phosphate uridylyltransferase">
    <location>
        <begin position="1"/>
        <end position="487"/>
    </location>
</feature>
<sequence>MTSLDQFVTAVIASPSQYTELDRIYVHNRVLGLVGEGDPIAASDDQLTSLTDALVKTAIQNGKIEATQSDEDILADQLMDLVTPLPSVLNQRFWDKYQVSPQTATDYFFNLSKANDYIKTRAIAKNVVFPAKTPFGDLEITINLSKPEKDPKAIAAARNQPQDGYPLCQLCMQNEGYLGRLGYPARSNHRIIRLTLGGNTWGFQYSPYAYFNEHSIFLDQEHRPMVINRQTFTNLLEIVQQFPHYFVGSNADLPIVGGSMLSHEHYQGGRHEFPMMKAPIARTIDLGIAGVKAGIVKWPMSTIRLTSQDLVALTDAAVKIHETWKNYSDESVDVRAYTDGTRHHTTTPIARKVGDDYVLDIVLRDNQTSAEFPDGIFHPHQDVQHIKKENIGLIEVMGRAILPARLKTELAEVGKYLLDQPNQMVAMHQAWAAQLKATNTITADNVTTVIDTAVGNVFARVLADAGVFKWDDAGEAAFDRFVAAMHD</sequence>
<comment type="catalytic activity">
    <reaction evidence="1">
        <text>alpha-D-galactose 1-phosphate + UDP-alpha-D-glucose = alpha-D-glucose 1-phosphate + UDP-alpha-D-galactose</text>
        <dbReference type="Rhea" id="RHEA:13989"/>
        <dbReference type="ChEBI" id="CHEBI:58336"/>
        <dbReference type="ChEBI" id="CHEBI:58601"/>
        <dbReference type="ChEBI" id="CHEBI:58885"/>
        <dbReference type="ChEBI" id="CHEBI:66914"/>
        <dbReference type="EC" id="2.7.7.12"/>
    </reaction>
</comment>
<comment type="pathway">
    <text evidence="1">Carbohydrate metabolism; galactose metabolism.</text>
</comment>
<comment type="subcellular location">
    <subcellularLocation>
        <location evidence="1">Cytoplasm</location>
    </subcellularLocation>
</comment>
<comment type="similarity">
    <text evidence="1">Belongs to the galactose-1-phosphate uridylyltransferase type 2 family.</text>
</comment>
<keyword id="KW-0119">Carbohydrate metabolism</keyword>
<keyword id="KW-0963">Cytoplasm</keyword>
<keyword id="KW-0299">Galactose metabolism</keyword>
<keyword id="KW-0548">Nucleotidyltransferase</keyword>
<keyword id="KW-1185">Reference proteome</keyword>
<keyword id="KW-0808">Transferase</keyword>
<organism>
    <name type="scientific">Lactiplantibacillus plantarum (strain ATCC BAA-793 / NCIMB 8826 / WCFS1)</name>
    <name type="common">Lactobacillus plantarum</name>
    <dbReference type="NCBI Taxonomy" id="220668"/>
    <lineage>
        <taxon>Bacteria</taxon>
        <taxon>Bacillati</taxon>
        <taxon>Bacillota</taxon>
        <taxon>Bacilli</taxon>
        <taxon>Lactobacillales</taxon>
        <taxon>Lactobacillaceae</taxon>
        <taxon>Lactiplantibacillus</taxon>
    </lineage>
</organism>
<gene>
    <name evidence="1" type="primary">galT</name>
    <name type="ordered locus">lp_3480</name>
</gene>